<organism>
    <name type="scientific">Bos taurus</name>
    <name type="common">Bovine</name>
    <dbReference type="NCBI Taxonomy" id="9913"/>
    <lineage>
        <taxon>Eukaryota</taxon>
        <taxon>Metazoa</taxon>
        <taxon>Chordata</taxon>
        <taxon>Craniata</taxon>
        <taxon>Vertebrata</taxon>
        <taxon>Euteleostomi</taxon>
        <taxon>Mammalia</taxon>
        <taxon>Eutheria</taxon>
        <taxon>Laurasiatheria</taxon>
        <taxon>Artiodactyla</taxon>
        <taxon>Ruminantia</taxon>
        <taxon>Pecora</taxon>
        <taxon>Bovidae</taxon>
        <taxon>Bovinae</taxon>
        <taxon>Bos</taxon>
    </lineage>
</organism>
<dbReference type="EMBL" id="DAAA02052969">
    <property type="status" value="NOT_ANNOTATED_CDS"/>
    <property type="molecule type" value="Genomic_DNA"/>
</dbReference>
<dbReference type="EMBL" id="BC112766">
    <property type="protein sequence ID" value="AAI12767.1"/>
    <property type="molecule type" value="mRNA"/>
</dbReference>
<dbReference type="RefSeq" id="NP_001039591.1">
    <property type="nucleotide sequence ID" value="NM_001046126.2"/>
</dbReference>
<dbReference type="SMR" id="F1MGG3"/>
<dbReference type="FunCoup" id="F1MGG3">
    <property type="interactions" value="40"/>
</dbReference>
<dbReference type="STRING" id="9913.ENSBTAP00000022860"/>
<dbReference type="PaxDb" id="9913-ENSBTAP00000022860"/>
<dbReference type="GeneID" id="512648"/>
<dbReference type="KEGG" id="bta:512648"/>
<dbReference type="CTD" id="80237"/>
<dbReference type="eggNOG" id="KOG4796">
    <property type="taxonomic scope" value="Eukaryota"/>
</dbReference>
<dbReference type="HOGENOM" id="CLU_692530_0_0_1"/>
<dbReference type="InParanoid" id="F1MGG3"/>
<dbReference type="OrthoDB" id="6284217at2759"/>
<dbReference type="TreeFam" id="TF337345"/>
<dbReference type="Proteomes" id="UP000009136">
    <property type="component" value="Unplaced"/>
</dbReference>
<dbReference type="GO" id="GO:0005634">
    <property type="term" value="C:nucleus"/>
    <property type="evidence" value="ECO:0000250"/>
    <property type="project" value="UniProtKB"/>
</dbReference>
<dbReference type="GO" id="GO:0008023">
    <property type="term" value="C:transcription elongation factor complex"/>
    <property type="evidence" value="ECO:0000250"/>
    <property type="project" value="UniProtKB"/>
</dbReference>
<dbReference type="GO" id="GO:0000987">
    <property type="term" value="F:cis-regulatory region sequence-specific DNA binding"/>
    <property type="evidence" value="ECO:0000250"/>
    <property type="project" value="UniProtKB"/>
</dbReference>
<dbReference type="GO" id="GO:0045944">
    <property type="term" value="P:positive regulation of transcription by RNA polymerase II"/>
    <property type="evidence" value="ECO:0000250"/>
    <property type="project" value="UniProtKB"/>
</dbReference>
<dbReference type="GO" id="GO:0032968">
    <property type="term" value="P:positive regulation of transcription elongation by RNA polymerase II"/>
    <property type="evidence" value="ECO:0000318"/>
    <property type="project" value="GO_Central"/>
</dbReference>
<dbReference type="GO" id="GO:0010717">
    <property type="term" value="P:regulation of epithelial to mesenchymal transition"/>
    <property type="evidence" value="ECO:0000250"/>
    <property type="project" value="UniProtKB"/>
</dbReference>
<dbReference type="GO" id="GO:0042795">
    <property type="term" value="P:snRNA transcription by RNA polymerase II"/>
    <property type="evidence" value="ECO:0000250"/>
    <property type="project" value="UniProtKB"/>
</dbReference>
<dbReference type="GO" id="GO:0048863">
    <property type="term" value="P:stem cell differentiation"/>
    <property type="evidence" value="ECO:0000250"/>
    <property type="project" value="UniProtKB"/>
</dbReference>
<dbReference type="GO" id="GO:0006366">
    <property type="term" value="P:transcription by RNA polymerase II"/>
    <property type="evidence" value="ECO:0000250"/>
    <property type="project" value="UniProtKB"/>
</dbReference>
<dbReference type="GO" id="GO:0006368">
    <property type="term" value="P:transcription elongation by RNA polymerase II"/>
    <property type="evidence" value="ECO:0007669"/>
    <property type="project" value="InterPro"/>
</dbReference>
<dbReference type="Gene3D" id="6.10.140.340">
    <property type="match status" value="1"/>
</dbReference>
<dbReference type="InterPro" id="IPR031176">
    <property type="entry name" value="ELL/occludin"/>
</dbReference>
<dbReference type="InterPro" id="IPR019464">
    <property type="entry name" value="ELL_N"/>
</dbReference>
<dbReference type="InterPro" id="IPR010844">
    <property type="entry name" value="Occludin_ELL"/>
</dbReference>
<dbReference type="PANTHER" id="PTHR23288">
    <property type="entry name" value="OCCLUDIN AND RNA POLYMERASE II ELONGATION FACTOR ELL"/>
    <property type="match status" value="1"/>
</dbReference>
<dbReference type="PANTHER" id="PTHR23288:SF18">
    <property type="entry name" value="RNA POLYMERASE II ELONGATION FACTOR ELL3"/>
    <property type="match status" value="1"/>
</dbReference>
<dbReference type="Pfam" id="PF10390">
    <property type="entry name" value="ELL"/>
    <property type="match status" value="1"/>
</dbReference>
<dbReference type="Pfam" id="PF07303">
    <property type="entry name" value="Occludin_ELL"/>
    <property type="match status" value="1"/>
</dbReference>
<dbReference type="SUPFAM" id="SSF144292">
    <property type="entry name" value="occludin/ELL-like"/>
    <property type="match status" value="1"/>
</dbReference>
<dbReference type="PROSITE" id="PS51980">
    <property type="entry name" value="OCEL"/>
    <property type="match status" value="1"/>
</dbReference>
<keyword id="KW-0539">Nucleus</keyword>
<keyword id="KW-1185">Reference proteome</keyword>
<keyword id="KW-0804">Transcription</keyword>
<keyword id="KW-0805">Transcription regulation</keyword>
<name>ELL3_BOVIN</name>
<accession>F1MGG3</accession>
<accession>Q2KI53</accession>
<feature type="chain" id="PRO_0000421766" description="RNA polymerase II elongation factor ELL3">
    <location>
        <begin position="1"/>
        <end position="395"/>
    </location>
</feature>
<feature type="domain" description="OCEL" evidence="2">
    <location>
        <begin position="283"/>
        <end position="393"/>
    </location>
</feature>
<feature type="region of interest" description="Disordered" evidence="3">
    <location>
        <begin position="124"/>
        <end position="149"/>
    </location>
</feature>
<feature type="region of interest" description="Disordered" evidence="3">
    <location>
        <begin position="163"/>
        <end position="182"/>
    </location>
</feature>
<feature type="region of interest" description="Disordered" evidence="3">
    <location>
        <begin position="194"/>
        <end position="218"/>
    </location>
</feature>
<feature type="region of interest" description="Disordered" evidence="3">
    <location>
        <begin position="233"/>
        <end position="279"/>
    </location>
</feature>
<feature type="compositionally biased region" description="Basic and acidic residues" evidence="3">
    <location>
        <begin position="130"/>
        <end position="140"/>
    </location>
</feature>
<feature type="compositionally biased region" description="Polar residues" evidence="3">
    <location>
        <begin position="168"/>
        <end position="177"/>
    </location>
</feature>
<feature type="compositionally biased region" description="Acidic residues" evidence="3">
    <location>
        <begin position="246"/>
        <end position="258"/>
    </location>
</feature>
<feature type="compositionally biased region" description="Polar residues" evidence="3">
    <location>
        <begin position="268"/>
        <end position="277"/>
    </location>
</feature>
<feature type="sequence conflict" description="In Ref. 2; AAI12767." evidence="4" ref="2">
    <original>I</original>
    <variation>N</variation>
    <location>
        <position position="113"/>
    </location>
</feature>
<protein>
    <recommendedName>
        <fullName>RNA polymerase II elongation factor ELL3</fullName>
    </recommendedName>
</protein>
<sequence>MEGPQELLSGKLRLCFTPAARTSLLLLKLNDAALRALQECHRQQVRPVIAFQGNRGYLRLPGPHWSCLFSFIVSQCGQEGPGGPGLDLVCQCPGRSGPNRLHCLGPLRERLTIWAAMDSIPAPSSLQRHNRTEDARDRESWQNVGDYPEADTISQSQMGLEEVPDPLASSQGQSLPGSSREHMAQWEVRNQTLLPNRDPDQALPPSASQKHVDKKRPAPAAMVELKQKRLRTLAPSPLQGLPSQDLQEEDWEQEDKDEDMGPRLEHSPSVQADSESLSPEEVPDYLLQYRAIHSAEQQHAYEQDFETDYAEYRILHARVAAASQRFIELAAEMNNVQRGTPEHKALEEKIVQEYKKFRKRYPGYREEKRRCEYLHQKLSHIKGLILEFEEKNRGS</sequence>
<proteinExistence type="evidence at transcript level"/>
<gene>
    <name type="primary">ELL3</name>
</gene>
<evidence type="ECO:0000250" key="1"/>
<evidence type="ECO:0000255" key="2">
    <source>
        <dbReference type="PROSITE-ProRule" id="PRU01324"/>
    </source>
</evidence>
<evidence type="ECO:0000256" key="3">
    <source>
        <dbReference type="SAM" id="MobiDB-lite"/>
    </source>
</evidence>
<evidence type="ECO:0000305" key="4"/>
<comment type="function">
    <text evidence="1">Enhancer-binding elongation factor that specifically binds enhancers in embryonic stem cells (ES cells), marks them, and is required for their future activation during stem cell specification. Elongation factor component of the super elongation complex (SEC), a complex required to increase the catalytic rate of RNA polymerase II transcription by suppressing transient pausing by the polymerase at multiple sites along the DNA. Component of the little elongation complex (LEC), a complex required to regulate small nuclear RNA (snRNA) gene transcription by RNA polymerase II and III. Does not only bind to enhancer regions of active genes, but also marks the enhancers that are in a poised or inactive state in ES cells and is required for establishing proper RNA polymerase II occupancy at developmentally regulated genes in a cohesin-dependent manner. Probably required for priming developmentally regulated genes for later recruitment of the super elongation complex (SEC), for transcriptional activation during differentiation. Required for recruitment of P-TEFb within SEC during differentiation. Probably preloaded on germ cell chromatin, suggesting that it may prime gene activation by marking enhancers as early as in the germ cells. Promoting epithelial-mesenchymal transition (EMT) (By similarity).</text>
</comment>
<comment type="subunit">
    <text evidence="1">Interacts with AFF4. Component of the super elongation complex (SEC), at least composed of EAF1, EAF2, CDK9, MLLT3/AF9, AFF (AFF1 or AFF4), the P-TEFb complex and ELL (ELL, ELL2 or ELL3). Component of the little elongation complex (LEC), at least composed of ELL (ELL, ELL2 or ELL3), ZC3H8, ICE1 and ICE2 (By similarity).</text>
</comment>
<comment type="subcellular location">
    <subcellularLocation>
        <location evidence="1">Nucleus</location>
    </subcellularLocation>
</comment>
<comment type="similarity">
    <text evidence="4">Belongs to the ELL/occludin family.</text>
</comment>
<reference key="1">
    <citation type="journal article" date="2009" name="Genome Biol.">
        <title>A whole-genome assembly of the domestic cow, Bos taurus.</title>
        <authorList>
            <person name="Zimin A.V."/>
            <person name="Delcher A.L."/>
            <person name="Florea L."/>
            <person name="Kelley D.R."/>
            <person name="Schatz M.C."/>
            <person name="Puiu D."/>
            <person name="Hanrahan F."/>
            <person name="Pertea G."/>
            <person name="Van Tassell C.P."/>
            <person name="Sonstegard T.S."/>
            <person name="Marcais G."/>
            <person name="Roberts M."/>
            <person name="Subramanian P."/>
            <person name="Yorke J.A."/>
            <person name="Salzberg S.L."/>
        </authorList>
    </citation>
    <scope>NUCLEOTIDE SEQUENCE [LARGE SCALE GENOMIC DNA]</scope>
    <source>
        <strain>Hereford</strain>
    </source>
</reference>
<reference key="2">
    <citation type="submission" date="2006-01" db="EMBL/GenBank/DDBJ databases">
        <authorList>
            <consortium name="NIH - Mammalian Gene Collection (MGC) project"/>
        </authorList>
    </citation>
    <scope>NUCLEOTIDE SEQUENCE [LARGE SCALE MRNA]</scope>
    <source>
        <strain>Hereford</strain>
        <tissue>Heart ventricle</tissue>
    </source>
</reference>